<accession>Q9R1P4</accession>
<feature type="chain" id="PRO_0000124062" description="Proteasome subunit alpha type-1">
    <location>
        <begin position="1"/>
        <end position="263"/>
    </location>
</feature>
<feature type="region of interest" description="Disordered" evidence="4">
    <location>
        <begin position="232"/>
        <end position="263"/>
    </location>
</feature>
<feature type="compositionally biased region" description="Basic and acidic residues" evidence="4">
    <location>
        <begin position="253"/>
        <end position="263"/>
    </location>
</feature>
<feature type="modified residue" description="N-acetylmethionine" evidence="1">
    <location>
        <position position="1"/>
    </location>
</feature>
<feature type="modified residue" description="Phosphoserine; alternate" evidence="2">
    <location>
        <position position="110"/>
    </location>
</feature>
<feature type="modified residue" description="Phosphoserine" evidence="14">
    <location>
        <position position="177"/>
    </location>
</feature>
<feature type="glycosylation site" description="O-linked (GlcNAc) serine; alternate" evidence="12">
    <location>
        <position position="110"/>
    </location>
</feature>
<feature type="cross-link" description="Glycyl lysine isopeptide (Lys-Gly) (interchain with G-Cter in ubiquitin)" evidence="2">
    <location>
        <position position="115"/>
    </location>
</feature>
<feature type="cross-link" description="Glycyl lysine isopeptide (Lys-Gly) (interchain with G-Cter in ubiquitin)" evidence="2">
    <location>
        <position position="208"/>
    </location>
</feature>
<feature type="strand" evidence="15">
    <location>
        <begin position="6"/>
        <end position="8"/>
    </location>
</feature>
<feature type="helix" evidence="15">
    <location>
        <begin position="20"/>
        <end position="31"/>
    </location>
</feature>
<feature type="strand" evidence="15">
    <location>
        <begin position="35"/>
        <end position="39"/>
    </location>
</feature>
<feature type="strand" evidence="15">
    <location>
        <begin position="41"/>
        <end position="49"/>
    </location>
</feature>
<feature type="strand" evidence="16">
    <location>
        <begin position="53"/>
        <end position="57"/>
    </location>
</feature>
<feature type="strand" evidence="15">
    <location>
        <begin position="63"/>
        <end position="65"/>
    </location>
</feature>
<feature type="strand" evidence="15">
    <location>
        <begin position="67"/>
        <end position="76"/>
    </location>
</feature>
<feature type="helix" evidence="15">
    <location>
        <begin position="78"/>
        <end position="98"/>
    </location>
</feature>
<feature type="strand" evidence="15">
    <location>
        <begin position="99"/>
        <end position="101"/>
    </location>
</feature>
<feature type="helix" evidence="15">
    <location>
        <begin position="105"/>
        <end position="117"/>
    </location>
</feature>
<feature type="helix" evidence="15">
    <location>
        <begin position="118"/>
        <end position="120"/>
    </location>
</feature>
<feature type="strand" evidence="15">
    <location>
        <begin position="130"/>
        <end position="138"/>
    </location>
</feature>
<feature type="strand" evidence="15">
    <location>
        <begin position="141"/>
        <end position="147"/>
    </location>
</feature>
<feature type="strand" evidence="15">
    <location>
        <begin position="149"/>
        <end position="151"/>
    </location>
</feature>
<feature type="strand" evidence="15">
    <location>
        <begin position="153"/>
        <end position="163"/>
    </location>
</feature>
<feature type="helix" evidence="15">
    <location>
        <begin position="166"/>
        <end position="174"/>
    </location>
</feature>
<feature type="turn" evidence="16">
    <location>
        <begin position="176"/>
        <end position="178"/>
    </location>
</feature>
<feature type="helix" evidence="16">
    <location>
        <begin position="179"/>
        <end position="181"/>
    </location>
</feature>
<feature type="helix" evidence="15">
    <location>
        <begin position="184"/>
        <end position="195"/>
    </location>
</feature>
<feature type="turn" evidence="15">
    <location>
        <begin position="196"/>
        <end position="198"/>
    </location>
</feature>
<feature type="turn" evidence="15">
    <location>
        <begin position="207"/>
        <end position="209"/>
    </location>
</feature>
<feature type="strand" evidence="15">
    <location>
        <begin position="210"/>
        <end position="219"/>
    </location>
</feature>
<feature type="strand" evidence="15">
    <location>
        <begin position="222"/>
        <end position="224"/>
    </location>
</feature>
<feature type="turn" evidence="15">
    <location>
        <begin position="227"/>
        <end position="229"/>
    </location>
</feature>
<feature type="helix" evidence="15">
    <location>
        <begin position="230"/>
        <end position="233"/>
    </location>
</feature>
<keyword id="KW-0002">3D-structure</keyword>
<keyword id="KW-0007">Acetylation</keyword>
<keyword id="KW-0963">Cytoplasm</keyword>
<keyword id="KW-0903">Direct protein sequencing</keyword>
<keyword id="KW-0325">Glycoprotein</keyword>
<keyword id="KW-0391">Immunity</keyword>
<keyword id="KW-1017">Isopeptide bond</keyword>
<keyword id="KW-0539">Nucleus</keyword>
<keyword id="KW-0597">Phosphoprotein</keyword>
<keyword id="KW-0647">Proteasome</keyword>
<keyword id="KW-1185">Reference proteome</keyword>
<keyword id="KW-0832">Ubl conjugation</keyword>
<protein>
    <recommendedName>
        <fullName evidence="13">Proteasome subunit alpha type-1</fullName>
    </recommendedName>
    <alternativeName>
        <fullName>Macropain subunit C2</fullName>
    </alternativeName>
    <alternativeName>
        <fullName>Multicatalytic endopeptidase complex subunit C2</fullName>
    </alternativeName>
    <alternativeName>
        <fullName>Proteasome component C2</fullName>
    </alternativeName>
    <alternativeName>
        <fullName>Proteasome nu chain</fullName>
    </alternativeName>
    <alternativeName>
        <fullName>Proteasome subunit alpha-6</fullName>
        <shortName>alpha-6</shortName>
    </alternativeName>
</protein>
<name>PSA1_MOUSE</name>
<organism>
    <name type="scientific">Mus musculus</name>
    <name type="common">Mouse</name>
    <dbReference type="NCBI Taxonomy" id="10090"/>
    <lineage>
        <taxon>Eukaryota</taxon>
        <taxon>Metazoa</taxon>
        <taxon>Chordata</taxon>
        <taxon>Craniata</taxon>
        <taxon>Vertebrata</taxon>
        <taxon>Euteleostomi</taxon>
        <taxon>Mammalia</taxon>
        <taxon>Eutheria</taxon>
        <taxon>Euarchontoglires</taxon>
        <taxon>Glires</taxon>
        <taxon>Rodentia</taxon>
        <taxon>Myomorpha</taxon>
        <taxon>Muroidea</taxon>
        <taxon>Muridae</taxon>
        <taxon>Murinae</taxon>
        <taxon>Mus</taxon>
        <taxon>Mus</taxon>
    </lineage>
</organism>
<evidence type="ECO:0000250" key="1">
    <source>
        <dbReference type="UniProtKB" id="P18420"/>
    </source>
</evidence>
<evidence type="ECO:0000250" key="2">
    <source>
        <dbReference type="UniProtKB" id="P25786"/>
    </source>
</evidence>
<evidence type="ECO:0000255" key="3">
    <source>
        <dbReference type="PROSITE-ProRule" id="PRU00808"/>
    </source>
</evidence>
<evidence type="ECO:0000256" key="4">
    <source>
        <dbReference type="SAM" id="MobiDB-lite"/>
    </source>
</evidence>
<evidence type="ECO:0000269" key="5">
    <source>
    </source>
</evidence>
<evidence type="ECO:0000269" key="6">
    <source>
    </source>
</evidence>
<evidence type="ECO:0000269" key="7">
    <source>
    </source>
</evidence>
<evidence type="ECO:0000269" key="8">
    <source>
    </source>
</evidence>
<evidence type="ECO:0000269" key="9">
    <source>
    </source>
</evidence>
<evidence type="ECO:0000269" key="10">
    <source>
    </source>
</evidence>
<evidence type="ECO:0000269" key="11">
    <source>
    </source>
</evidence>
<evidence type="ECO:0000269" key="12">
    <source>
    </source>
</evidence>
<evidence type="ECO:0000305" key="13"/>
<evidence type="ECO:0007744" key="14">
    <source>
    </source>
</evidence>
<evidence type="ECO:0007829" key="15">
    <source>
        <dbReference type="PDB" id="3UNB"/>
    </source>
</evidence>
<evidence type="ECO:0007829" key="16">
    <source>
        <dbReference type="PDB" id="3UNF"/>
    </source>
</evidence>
<proteinExistence type="evidence at protein level"/>
<comment type="function">
    <text evidence="5 7 10 11">Component of the 20S core proteasome complex involved in the proteolytic degradation of most intracellular proteins. This complex plays numerous essential roles within the cell by associating with different regulatory particles. Associated with two 19S regulatory particles, forms the 26S proteasome and thus participates in the ATP-dependent degradation of ubiquitinated proteins. The 26S proteasome plays a key role in the maintenance of protein homeostasis by removing misfolded or damaged proteins that could impair cellular functions, and by removing proteins whose functions are no longer required. Associated with the PA200 or PA28, the 20S proteasome mediates ubiquitin-independent protein degradation. This type of proteolysis is required in several pathways including spermatogenesis (20S-PA200 complex) or generation of a subset of MHC class I-presented antigenic peptides (20S-PA28 complex).</text>
</comment>
<comment type="subunit">
    <text evidence="2 8 11">The 26S proteasome consists of a 20S proteasome core and two 19S regulatory subunits. The 20S proteasome core is a barrel-shaped complex made of 28 subunits that are arranged in four stacked rings. The two outer rings are each formed by seven alpha subunits, and the two inner rings are formed by seven beta subunits. The proteolytic activity is exerted by three beta-subunits PSMB5, PSMB6 and PSMB7 (PubMed:16857966). Interacts with NOTCH3 (By similarity). Interacts with ZFAND1 (By similarity).</text>
</comment>
<comment type="interaction">
    <interactant intactId="EBI-991653">
        <id>Q9R1P4</id>
    </interactant>
    <interactant intactId="EBI-15701753">
        <id>Q91X58</id>
        <label>Zfand2b</label>
    </interactant>
    <organismsDiffer>false</organismsDiffer>
    <experiments>2</experiments>
</comment>
<comment type="interaction">
    <interactant intactId="EBI-991653">
        <id>Q9R1P4</id>
    </interactant>
    <interactant intactId="EBI-1236377">
        <id>Q9UM47</id>
        <label>NOTCH3</label>
    </interactant>
    <organismsDiffer>true</organismsDiffer>
    <experiments>2</experiments>
</comment>
<comment type="subcellular location">
    <subcellularLocation>
        <location evidence="2">Cytoplasm</location>
    </subcellularLocation>
    <subcellularLocation>
        <location evidence="2">Nucleus</location>
    </subcellularLocation>
    <text evidence="2">Translocated from the cytoplasm into the nucleus following interaction with AKIRIN2, which bridges the proteasome with the nuclear import receptor IPO9.</text>
</comment>
<comment type="tissue specificity">
    <text evidence="11">Detected in liver (at protein level).</text>
</comment>
<comment type="induction">
    <text evidence="6 9">Up-regulated in liver tumor tissues. Up-regulated by the antioxidant dithiolethione (D3T) in liver, lung and colon (at the protein level).</text>
</comment>
<comment type="PTM">
    <text>C-terminal extension is partially cleaved off by limited proteolysis leading to a conversion of the proteasome from its latent into its active form.</text>
</comment>
<comment type="similarity">
    <text evidence="3">Belongs to the peptidase T1A family.</text>
</comment>
<reference key="1">
    <citation type="journal article" date="1999" name="Immunogenetics">
        <title>The complete primary structure of mouse 20S proteasomes.</title>
        <authorList>
            <person name="Elenich L.A."/>
            <person name="Nandi D."/>
            <person name="Kent E.A."/>
            <person name="McCluskey T.S."/>
            <person name="Cruz M."/>
            <person name="Iyer M.N."/>
            <person name="Woodward E.C."/>
            <person name="Conn C.W."/>
            <person name="Ochoa A.L."/>
            <person name="Ginsburg D.B."/>
            <person name="Monaco J.J."/>
        </authorList>
    </citation>
    <scope>NUCLEOTIDE SEQUENCE [MRNA]</scope>
    <source>
        <strain>B10.A</strain>
    </source>
</reference>
<reference key="2">
    <citation type="journal article" date="2000" name="Genomics">
        <title>The mouse Psma1 gene coding for the alpha-type C2 proteasome subunit: structural and functional analysis, mapping, and colocalization with Pde3b on mouse chromosome 7.</title>
        <authorList>
            <person name="Hopitzan A."/>
            <person name="Himmelbauer H."/>
            <person name="Spevak W."/>
            <person name="Castanon M.J."/>
        </authorList>
    </citation>
    <scope>NUCLEOTIDE SEQUENCE [GENOMIC DNA / MRNA]</scope>
    <source>
        <tissue>Skeletal muscle</tissue>
    </source>
</reference>
<reference key="3">
    <citation type="journal article" date="2004" name="Genome Res.">
        <title>The status, quality, and expansion of the NIH full-length cDNA project: the Mammalian Gene Collection (MGC).</title>
        <authorList>
            <consortium name="The MGC Project Team"/>
        </authorList>
    </citation>
    <scope>NUCLEOTIDE SEQUENCE [LARGE SCALE MRNA]</scope>
    <source>
        <strain>FVB/N-3</strain>
        <tissue>Mammary gland</tissue>
    </source>
</reference>
<reference key="4">
    <citation type="submission" date="2007-07" db="UniProtKB">
        <authorList>
            <person name="Lubec G."/>
            <person name="Klug S."/>
            <person name="Yang J.W."/>
            <person name="Zigmond M."/>
        </authorList>
    </citation>
    <scope>PROTEIN SEQUENCE OF 63-82 AND 97-107</scope>
    <scope>IDENTIFICATION BY MASS SPECTROMETRY</scope>
    <source>
        <tissue>Brain</tissue>
        <tissue>Hippocampus</tissue>
    </source>
</reference>
<reference key="5">
    <citation type="journal article" date="2003" name="J. Immunol.">
        <title>The proteasome as a lipopolysaccharide-binding protein in macrophages: differential effects of proteasome inhibition on lipopolysaccharide-induced signaling events.</title>
        <authorList>
            <person name="Qureshi N."/>
            <person name="Perera P.-Y."/>
            <person name="Shen J."/>
            <person name="Zhang G."/>
            <person name="Lenschat A."/>
            <person name="Splitter G."/>
            <person name="Morrison D.C."/>
            <person name="Vogel S.N."/>
        </authorList>
    </citation>
    <scope>FUNCTION</scope>
</reference>
<reference key="6">
    <citation type="journal article" date="2006" name="Circ. Res.">
        <title>Mapping the murine cardiac 26S proteasome complexes.</title>
        <authorList>
            <person name="Gomes A.V."/>
            <person name="Zong C."/>
            <person name="Edmondson R.D."/>
            <person name="Li X."/>
            <person name="Stefani E."/>
            <person name="Zhang J."/>
            <person name="Jones R.C."/>
            <person name="Thyparambil S."/>
            <person name="Wang G.W."/>
            <person name="Qiao X."/>
            <person name="Bardag-Gorce F."/>
            <person name="Ping P."/>
        </authorList>
    </citation>
    <scope>IDENTIFICATION IN THE 20S PROTEASOME CORE COMPLEX</scope>
</reference>
<reference key="7">
    <citation type="journal article" date="2006" name="Mol. Cell. Biol.">
        <title>Proteasome activator PA200 is required for normal spermatogenesis.</title>
        <authorList>
            <person name="Khor B."/>
            <person name="Bredemeyer A.L."/>
            <person name="Huang C.-Y."/>
            <person name="Turnbull I.R."/>
            <person name="Evans R."/>
            <person name="Maggi L.B. Jr."/>
            <person name="White J.M."/>
            <person name="Walker L.M."/>
            <person name="Carnes K."/>
            <person name="Hess R.A."/>
            <person name="Sleckman B.P."/>
        </authorList>
    </citation>
    <scope>FUNCTION</scope>
</reference>
<reference key="8">
    <citation type="journal article" date="2006" name="Proteomics">
        <title>The up-regulation of proteasome subunits and lysosomal proteases in hepatocellular carcinomas of the HBx gene knockin transgenic mice.</title>
        <authorList>
            <person name="Cui F."/>
            <person name="Wang Y."/>
            <person name="Wang J."/>
            <person name="Wei K."/>
            <person name="Hu J."/>
            <person name="Liu F."/>
            <person name="Wang H."/>
            <person name="Zhao X."/>
            <person name="Zhang X."/>
            <person name="Yang X."/>
        </authorList>
    </citation>
    <scope>INDUCTION</scope>
</reference>
<reference key="9">
    <citation type="journal article" date="2007" name="Life Sci.">
        <title>Tissue specific increase of the catalytic subunits of the 26S proteasome by indirect antioxidant dithiolethione in mice: enhanced activity for degradation of abnormal protein.</title>
        <authorList>
            <person name="Kwak M.K."/>
            <person name="Huang B."/>
            <person name="Chang H."/>
            <person name="Kim J.A."/>
            <person name="Kensler T.W."/>
        </authorList>
    </citation>
    <scope>INDUCTION BY DITHIOLETHIONE</scope>
</reference>
<reference key="10">
    <citation type="journal article" date="2009" name="Proteomics">
        <title>Proteomics of RAW 264.7 macrophages upon interaction with heat-inactivated Candida albicans cells unravel an anti-inflammatory response.</title>
        <authorList>
            <person name="Martinez-Solano L."/>
            <person name="Reales-Calderon J.A."/>
            <person name="Nombela C."/>
            <person name="Molero G."/>
            <person name="Gil C."/>
        </authorList>
    </citation>
    <scope>FUNCTION</scope>
    <scope>IDENTIFICATION BY MASS SPECTROMETRY</scope>
</reference>
<reference key="11">
    <citation type="journal article" date="2010" name="Cell">
        <title>A tissue-specific atlas of mouse protein phosphorylation and expression.</title>
        <authorList>
            <person name="Huttlin E.L."/>
            <person name="Jedrychowski M.P."/>
            <person name="Elias J.E."/>
            <person name="Goswami T."/>
            <person name="Rad R."/>
            <person name="Beausoleil S.A."/>
            <person name="Villen J."/>
            <person name="Haas W."/>
            <person name="Sowa M.E."/>
            <person name="Gygi S.P."/>
        </authorList>
    </citation>
    <scope>PHOSPHORYLATION [LARGE SCALE ANALYSIS] AT SER-177</scope>
    <scope>IDENTIFICATION BY MASS SPECTROMETRY [LARGE SCALE ANALYSIS]</scope>
    <source>
        <tissue>Brain</tissue>
        <tissue>Brown adipose tissue</tissue>
        <tissue>Heart</tissue>
        <tissue>Kidney</tissue>
        <tissue>Liver</tissue>
        <tissue>Lung</tissue>
        <tissue>Pancreas</tissue>
        <tissue>Spleen</tissue>
        <tissue>Testis</tissue>
    </source>
</reference>
<reference key="12">
    <citation type="journal article" date="2012" name="Mol. Cell. Proteomics">
        <title>Mapping of O-GlcNAc sites of 20 S proteasome subunits and Hsp90 by a novel biotin-cystamine tag.</title>
        <authorList>
            <person name="Overath T."/>
            <person name="Kuckelkorn U."/>
            <person name="Henklein P."/>
            <person name="Strehl B."/>
            <person name="Bonar D."/>
            <person name="Kloss A."/>
            <person name="Siele D."/>
            <person name="Kloetzel P.M."/>
            <person name="Janek K."/>
        </authorList>
    </citation>
    <scope>GLYCOSYLATION AT SER-110</scope>
    <source>
        <tissue>Brain</tissue>
        <tissue>Spleen</tissue>
    </source>
</reference>
<reference key="13">
    <citation type="journal article" date="2012" name="Cell">
        <title>Immuno- and constitutive proteasome crystal structures reveal differences in substrate and inhibitor specificity.</title>
        <authorList>
            <person name="Huber E.M."/>
            <person name="Basler M."/>
            <person name="Schwab R."/>
            <person name="Heinemeyer W."/>
            <person name="Kirk C.J."/>
            <person name="Groettrup M."/>
            <person name="Groll M."/>
        </authorList>
    </citation>
    <scope>X-RAY CRYSTALLOGRAPHY (2.90 ANGSTROMS) OF 20S IMMUNOPROTEASOME</scope>
    <scope>SUBUNIT</scope>
    <scope>FUNCTION</scope>
    <scope>TISSUE SPECIFICITY</scope>
</reference>
<dbReference type="EMBL" id="AF060088">
    <property type="protein sequence ID" value="AAD50533.1"/>
    <property type="molecule type" value="mRNA"/>
</dbReference>
<dbReference type="EMBL" id="AJ272019">
    <property type="protein sequence ID" value="CAB95966.1"/>
    <property type="molecule type" value="mRNA"/>
</dbReference>
<dbReference type="EMBL" id="AJ272272">
    <property type="protein sequence ID" value="CAB95969.1"/>
    <property type="molecule type" value="Genomic_DNA"/>
</dbReference>
<dbReference type="EMBL" id="BC005762">
    <property type="protein sequence ID" value="AAH05762.1"/>
    <property type="molecule type" value="mRNA"/>
</dbReference>
<dbReference type="CCDS" id="CCDS40094.1"/>
<dbReference type="RefSeq" id="NP_036095.1">
    <property type="nucleotide sequence ID" value="NM_011965.2"/>
</dbReference>
<dbReference type="PDB" id="3UNB">
    <property type="method" value="X-ray"/>
    <property type="resolution" value="2.90 A"/>
    <property type="chains" value="E/S/g/u=1-263"/>
</dbReference>
<dbReference type="PDB" id="3UNE">
    <property type="method" value="X-ray"/>
    <property type="resolution" value="3.20 A"/>
    <property type="chains" value="E/S/g/u=1-263"/>
</dbReference>
<dbReference type="PDB" id="3UNF">
    <property type="method" value="X-ray"/>
    <property type="resolution" value="2.90 A"/>
    <property type="chains" value="E/S=1-263"/>
</dbReference>
<dbReference type="PDB" id="3UNH">
    <property type="method" value="X-ray"/>
    <property type="resolution" value="3.20 A"/>
    <property type="chains" value="E/S=1-263"/>
</dbReference>
<dbReference type="PDB" id="8YPK">
    <property type="method" value="EM"/>
    <property type="resolution" value="2.70 A"/>
    <property type="chains" value="G/L=1-263"/>
</dbReference>
<dbReference type="PDB" id="8YVP">
    <property type="method" value="EM"/>
    <property type="resolution" value="2.50 A"/>
    <property type="chains" value="G/L=1-263"/>
</dbReference>
<dbReference type="PDBsum" id="3UNB"/>
<dbReference type="PDBsum" id="3UNE"/>
<dbReference type="PDBsum" id="3UNF"/>
<dbReference type="PDBsum" id="3UNH"/>
<dbReference type="PDBsum" id="8YPK"/>
<dbReference type="PDBsum" id="8YVP"/>
<dbReference type="EMDB" id="EMD-39482"/>
<dbReference type="EMDB" id="EMD-39612"/>
<dbReference type="SMR" id="Q9R1P4"/>
<dbReference type="BioGRID" id="204991">
    <property type="interactions" value="63"/>
</dbReference>
<dbReference type="CORUM" id="Q9R1P4"/>
<dbReference type="DIP" id="DIP-35147N"/>
<dbReference type="FunCoup" id="Q9R1P4">
    <property type="interactions" value="3120"/>
</dbReference>
<dbReference type="IntAct" id="Q9R1P4">
    <property type="interactions" value="23"/>
</dbReference>
<dbReference type="MINT" id="Q9R1P4"/>
<dbReference type="STRING" id="10090.ENSMUSP00000033008"/>
<dbReference type="MEROPS" id="T01.976"/>
<dbReference type="GlyCosmos" id="Q9R1P4">
    <property type="glycosylation" value="1 site, No reported glycans"/>
</dbReference>
<dbReference type="GlyGen" id="Q9R1P4">
    <property type="glycosylation" value="2 sites, 1 O-linked glycan (2 sites)"/>
</dbReference>
<dbReference type="iPTMnet" id="Q9R1P4"/>
<dbReference type="PhosphoSitePlus" id="Q9R1P4"/>
<dbReference type="SwissPalm" id="Q9R1P4"/>
<dbReference type="REPRODUCTION-2DPAGE" id="IPI00283862"/>
<dbReference type="REPRODUCTION-2DPAGE" id="Q9R1P4"/>
<dbReference type="CPTAC" id="non-CPTAC-3602"/>
<dbReference type="jPOST" id="Q9R1P4"/>
<dbReference type="PaxDb" id="10090-ENSMUSP00000033008"/>
<dbReference type="ProteomicsDB" id="291689"/>
<dbReference type="Pumba" id="Q9R1P4"/>
<dbReference type="Antibodypedia" id="11977">
    <property type="antibodies" value="375 antibodies from 40 providers"/>
</dbReference>
<dbReference type="DNASU" id="26440"/>
<dbReference type="Ensembl" id="ENSMUST00000033008.10">
    <property type="protein sequence ID" value="ENSMUSP00000033008.10"/>
    <property type="gene ID" value="ENSMUSG00000030751.19"/>
</dbReference>
<dbReference type="GeneID" id="26440"/>
<dbReference type="KEGG" id="mmu:26440"/>
<dbReference type="UCSC" id="uc009jhy.1">
    <property type="organism name" value="mouse"/>
</dbReference>
<dbReference type="AGR" id="MGI:1347005"/>
<dbReference type="CTD" id="5682"/>
<dbReference type="MGI" id="MGI:1347005">
    <property type="gene designation" value="Psma1"/>
</dbReference>
<dbReference type="VEuPathDB" id="HostDB:ENSMUSG00000030751"/>
<dbReference type="eggNOG" id="KOG0863">
    <property type="taxonomic scope" value="Eukaryota"/>
</dbReference>
<dbReference type="GeneTree" id="ENSGT00550000074855"/>
<dbReference type="HOGENOM" id="CLU_035750_8_0_1"/>
<dbReference type="InParanoid" id="Q9R1P4"/>
<dbReference type="OMA" id="NTQVYGK"/>
<dbReference type="OrthoDB" id="431557at2759"/>
<dbReference type="PhylomeDB" id="Q9R1P4"/>
<dbReference type="TreeFam" id="TF106206"/>
<dbReference type="Reactome" id="R-MMU-1169091">
    <property type="pathway name" value="Activation of NF-kappaB in B cells"/>
</dbReference>
<dbReference type="Reactome" id="R-MMU-1234176">
    <property type="pathway name" value="Oxygen-dependent proline hydroxylation of Hypoxia-inducible Factor Alpha"/>
</dbReference>
<dbReference type="Reactome" id="R-MMU-1236978">
    <property type="pathway name" value="Cross-presentation of soluble exogenous antigens (endosomes)"/>
</dbReference>
<dbReference type="Reactome" id="R-MMU-174084">
    <property type="pathway name" value="Autodegradation of Cdh1 by Cdh1:APC/C"/>
</dbReference>
<dbReference type="Reactome" id="R-MMU-174154">
    <property type="pathway name" value="APC/C:Cdc20 mediated degradation of Securin"/>
</dbReference>
<dbReference type="Reactome" id="R-MMU-174178">
    <property type="pathway name" value="APC/C:Cdh1 mediated degradation of Cdc20 and other APC/C:Cdh1 targeted proteins in late mitosis/early G1"/>
</dbReference>
<dbReference type="Reactome" id="R-MMU-174184">
    <property type="pathway name" value="Cdc20:Phospho-APC/C mediated degradation of Cyclin A"/>
</dbReference>
<dbReference type="Reactome" id="R-MMU-187577">
    <property type="pathway name" value="SCF(Skp2)-mediated degradation of p27/p21"/>
</dbReference>
<dbReference type="Reactome" id="R-MMU-195253">
    <property type="pathway name" value="Degradation of beta-catenin by the destruction complex"/>
</dbReference>
<dbReference type="Reactome" id="R-MMU-202424">
    <property type="pathway name" value="Downstream TCR signaling"/>
</dbReference>
<dbReference type="Reactome" id="R-MMU-2467813">
    <property type="pathway name" value="Separation of Sister Chromatids"/>
</dbReference>
<dbReference type="Reactome" id="R-MMU-2871837">
    <property type="pathway name" value="FCERI mediated NF-kB activation"/>
</dbReference>
<dbReference type="Reactome" id="R-MMU-349425">
    <property type="pathway name" value="Autodegradation of the E3 ubiquitin ligase COP1"/>
</dbReference>
<dbReference type="Reactome" id="R-MMU-350562">
    <property type="pathway name" value="Regulation of ornithine decarboxylase (ODC)"/>
</dbReference>
<dbReference type="Reactome" id="R-MMU-382556">
    <property type="pathway name" value="ABC-family proteins mediated transport"/>
</dbReference>
<dbReference type="Reactome" id="R-MMU-450408">
    <property type="pathway name" value="AUF1 (hnRNP D0) binds and destabilizes mRNA"/>
</dbReference>
<dbReference type="Reactome" id="R-MMU-4608870">
    <property type="pathway name" value="Asymmetric localization of PCP proteins"/>
</dbReference>
<dbReference type="Reactome" id="R-MMU-4641257">
    <property type="pathway name" value="Degradation of AXIN"/>
</dbReference>
<dbReference type="Reactome" id="R-MMU-4641258">
    <property type="pathway name" value="Degradation of DVL"/>
</dbReference>
<dbReference type="Reactome" id="R-MMU-5358346">
    <property type="pathway name" value="Hedgehog ligand biogenesis"/>
</dbReference>
<dbReference type="Reactome" id="R-MMU-5607761">
    <property type="pathway name" value="Dectin-1 mediated noncanonical NF-kB signaling"/>
</dbReference>
<dbReference type="Reactome" id="R-MMU-5607764">
    <property type="pathway name" value="CLEC7A (Dectin-1) signaling"/>
</dbReference>
<dbReference type="Reactome" id="R-MMU-5610780">
    <property type="pathway name" value="Degradation of GLI1 by the proteasome"/>
</dbReference>
<dbReference type="Reactome" id="R-MMU-5610785">
    <property type="pathway name" value="GLI3 is processed to GLI3R by the proteasome"/>
</dbReference>
<dbReference type="Reactome" id="R-MMU-5632684">
    <property type="pathway name" value="Hedgehog 'on' state"/>
</dbReference>
<dbReference type="Reactome" id="R-MMU-5658442">
    <property type="pathway name" value="Regulation of RAS by GAPs"/>
</dbReference>
<dbReference type="Reactome" id="R-MMU-5668541">
    <property type="pathway name" value="TNFR2 non-canonical NF-kB pathway"/>
</dbReference>
<dbReference type="Reactome" id="R-MMU-5676590">
    <property type="pathway name" value="NIK--&gt;noncanonical NF-kB signaling"/>
</dbReference>
<dbReference type="Reactome" id="R-MMU-5687128">
    <property type="pathway name" value="MAPK6/MAPK4 signaling"/>
</dbReference>
<dbReference type="Reactome" id="R-MMU-5689603">
    <property type="pathway name" value="UCH proteinases"/>
</dbReference>
<dbReference type="Reactome" id="R-MMU-5689880">
    <property type="pathway name" value="Ub-specific processing proteases"/>
</dbReference>
<dbReference type="Reactome" id="R-MMU-68867">
    <property type="pathway name" value="Assembly of the pre-replicative complex"/>
</dbReference>
<dbReference type="Reactome" id="R-MMU-68949">
    <property type="pathway name" value="Orc1 removal from chromatin"/>
</dbReference>
<dbReference type="Reactome" id="R-MMU-69017">
    <property type="pathway name" value="CDK-mediated phosphorylation and removal of Cdc6"/>
</dbReference>
<dbReference type="Reactome" id="R-MMU-69481">
    <property type="pathway name" value="G2/M Checkpoints"/>
</dbReference>
<dbReference type="Reactome" id="R-MMU-69601">
    <property type="pathway name" value="Ubiquitin Mediated Degradation of Phosphorylated Cdc25A"/>
</dbReference>
<dbReference type="Reactome" id="R-MMU-75815">
    <property type="pathway name" value="Ubiquitin-dependent degradation of Cyclin D"/>
</dbReference>
<dbReference type="Reactome" id="R-MMU-8852276">
    <property type="pathway name" value="The role of GTSE1 in G2/M progression after G2 checkpoint"/>
</dbReference>
<dbReference type="Reactome" id="R-MMU-8854050">
    <property type="pathway name" value="FBXL7 down-regulates AURKA during mitotic entry and in early mitosis"/>
</dbReference>
<dbReference type="Reactome" id="R-MMU-8939236">
    <property type="pathway name" value="RUNX1 regulates transcription of genes involved in differentiation of HSCs"/>
</dbReference>
<dbReference type="Reactome" id="R-MMU-8939902">
    <property type="pathway name" value="Regulation of RUNX2 expression and activity"/>
</dbReference>
<dbReference type="Reactome" id="R-MMU-8941858">
    <property type="pathway name" value="Regulation of RUNX3 expression and activity"/>
</dbReference>
<dbReference type="Reactome" id="R-MMU-8948751">
    <property type="pathway name" value="Regulation of PTEN stability and activity"/>
</dbReference>
<dbReference type="Reactome" id="R-MMU-8951664">
    <property type="pathway name" value="Neddylation"/>
</dbReference>
<dbReference type="Reactome" id="R-MMU-9020702">
    <property type="pathway name" value="Interleukin-1 signaling"/>
</dbReference>
<dbReference type="Reactome" id="R-MMU-9755511">
    <property type="pathway name" value="KEAP1-NFE2L2 pathway"/>
</dbReference>
<dbReference type="Reactome" id="R-MMU-9762114">
    <property type="pathway name" value="GSK3B and BTRC:CUL1-mediated-degradation of NFE2L2"/>
</dbReference>
<dbReference type="Reactome" id="R-MMU-983168">
    <property type="pathway name" value="Antigen processing: Ubiquitination &amp; Proteasome degradation"/>
</dbReference>
<dbReference type="Reactome" id="R-MMU-9907900">
    <property type="pathway name" value="Proteasome assembly"/>
</dbReference>
<dbReference type="BioGRID-ORCS" id="26440">
    <property type="hits" value="25 hits in 78 CRISPR screens"/>
</dbReference>
<dbReference type="ChiTaRS" id="Psma1">
    <property type="organism name" value="mouse"/>
</dbReference>
<dbReference type="EvolutionaryTrace" id="Q9R1P4"/>
<dbReference type="PRO" id="PR:Q9R1P4"/>
<dbReference type="Proteomes" id="UP000000589">
    <property type="component" value="Chromosome 7"/>
</dbReference>
<dbReference type="RNAct" id="Q9R1P4">
    <property type="molecule type" value="protein"/>
</dbReference>
<dbReference type="Bgee" id="ENSMUSG00000030751">
    <property type="expression patterns" value="Expressed in pharyngeal arch 2 and 287 other cell types or tissues"/>
</dbReference>
<dbReference type="ExpressionAtlas" id="Q9R1P4">
    <property type="expression patterns" value="baseline and differential"/>
</dbReference>
<dbReference type="GO" id="GO:0005813">
    <property type="term" value="C:centrosome"/>
    <property type="evidence" value="ECO:0007669"/>
    <property type="project" value="Ensembl"/>
</dbReference>
<dbReference type="GO" id="GO:0005829">
    <property type="term" value="C:cytosol"/>
    <property type="evidence" value="ECO:0000304"/>
    <property type="project" value="Reactome"/>
</dbReference>
<dbReference type="GO" id="GO:0005654">
    <property type="term" value="C:nucleoplasm"/>
    <property type="evidence" value="ECO:0000304"/>
    <property type="project" value="Reactome"/>
</dbReference>
<dbReference type="GO" id="GO:0000502">
    <property type="term" value="C:proteasome complex"/>
    <property type="evidence" value="ECO:0000314"/>
    <property type="project" value="MGI"/>
</dbReference>
<dbReference type="GO" id="GO:0005839">
    <property type="term" value="C:proteasome core complex"/>
    <property type="evidence" value="ECO:0000314"/>
    <property type="project" value="UniProtKB"/>
</dbReference>
<dbReference type="GO" id="GO:0019773">
    <property type="term" value="C:proteasome core complex, alpha-subunit complex"/>
    <property type="evidence" value="ECO:0000250"/>
    <property type="project" value="UniProtKB"/>
</dbReference>
<dbReference type="GO" id="GO:0001530">
    <property type="term" value="F:lipopolysaccharide binding"/>
    <property type="evidence" value="ECO:0000314"/>
    <property type="project" value="UniProtKB"/>
</dbReference>
<dbReference type="GO" id="GO:0002376">
    <property type="term" value="P:immune system process"/>
    <property type="evidence" value="ECO:0007669"/>
    <property type="project" value="UniProtKB-KW"/>
</dbReference>
<dbReference type="GO" id="GO:0002862">
    <property type="term" value="P:negative regulation of inflammatory response to antigenic stimulus"/>
    <property type="evidence" value="ECO:0000315"/>
    <property type="project" value="UniProtKB"/>
</dbReference>
<dbReference type="GO" id="GO:0006511">
    <property type="term" value="P:ubiquitin-dependent protein catabolic process"/>
    <property type="evidence" value="ECO:0007669"/>
    <property type="project" value="InterPro"/>
</dbReference>
<dbReference type="CDD" id="cd03749">
    <property type="entry name" value="proteasome_alpha_type_1"/>
    <property type="match status" value="1"/>
</dbReference>
<dbReference type="FunFam" id="3.60.20.10:FF:000025">
    <property type="entry name" value="Proteasome subunit alpha type"/>
    <property type="match status" value="1"/>
</dbReference>
<dbReference type="Gene3D" id="3.60.20.10">
    <property type="entry name" value="Glutamine Phosphoribosylpyrophosphate, subunit 1, domain 1"/>
    <property type="match status" value="1"/>
</dbReference>
<dbReference type="InterPro" id="IPR029055">
    <property type="entry name" value="Ntn_hydrolases_N"/>
</dbReference>
<dbReference type="InterPro" id="IPR050115">
    <property type="entry name" value="Proteasome_alpha"/>
</dbReference>
<dbReference type="InterPro" id="IPR023332">
    <property type="entry name" value="Proteasome_alpha-type"/>
</dbReference>
<dbReference type="InterPro" id="IPR035144">
    <property type="entry name" value="Proteasome_alpha1"/>
</dbReference>
<dbReference type="InterPro" id="IPR000426">
    <property type="entry name" value="Proteasome_asu_N"/>
</dbReference>
<dbReference type="InterPro" id="IPR001353">
    <property type="entry name" value="Proteasome_sua/b"/>
</dbReference>
<dbReference type="PANTHER" id="PTHR11599">
    <property type="entry name" value="PROTEASOME SUBUNIT ALPHA/BETA"/>
    <property type="match status" value="1"/>
</dbReference>
<dbReference type="Pfam" id="PF00227">
    <property type="entry name" value="Proteasome"/>
    <property type="match status" value="1"/>
</dbReference>
<dbReference type="Pfam" id="PF10584">
    <property type="entry name" value="Proteasome_A_N"/>
    <property type="match status" value="1"/>
</dbReference>
<dbReference type="SMART" id="SM00948">
    <property type="entry name" value="Proteasome_A_N"/>
    <property type="match status" value="1"/>
</dbReference>
<dbReference type="SUPFAM" id="SSF56235">
    <property type="entry name" value="N-terminal nucleophile aminohydrolases (Ntn hydrolases)"/>
    <property type="match status" value="1"/>
</dbReference>
<dbReference type="PROSITE" id="PS00388">
    <property type="entry name" value="PROTEASOME_ALPHA_1"/>
    <property type="match status" value="1"/>
</dbReference>
<dbReference type="PROSITE" id="PS51475">
    <property type="entry name" value="PROTEASOME_ALPHA_2"/>
    <property type="match status" value="1"/>
</dbReference>
<sequence length="263" mass="29547">MFRNQYDNDVTVWSPQGRIHQIEYAMEAVKQGSATVGLKSKTHAVLVALKRAQSELAAHQKKILHVDNHIGISIAGLTADARLLCNFMRQECLDSRFVFDRPLPVSRLVSLIGSKTQIPTQRYGRRPYGVGLLIAGYDDMGPHIFQTCPSANYFDCRAMSIGARSQSARTYLERHMSEFMECNLDELVKHGLRALRETLPAEQDLTTKNVSIGIVGKDLEFTIYDDDDVSPFLDGLEERPQRKAQPSQAAEEPAEKADEPMEH</sequence>
<gene>
    <name type="primary">Psma1</name>
</gene>